<feature type="transit peptide" description="Mitochondrion" evidence="1">
    <location>
        <begin position="1"/>
        <end position="9"/>
    </location>
</feature>
<feature type="chain" id="PRO_0000248281" description="Large ribosomal subunit protein bL20m">
    <location>
        <begin position="10"/>
        <end position="149"/>
    </location>
</feature>
<accession>Q5U4Z8</accession>
<protein>
    <recommendedName>
        <fullName evidence="3">Large ribosomal subunit protein bL20m</fullName>
    </recommendedName>
    <alternativeName>
        <fullName>39S ribosomal protein L20, mitochondrial</fullName>
        <shortName>L20mt</shortName>
        <shortName>MRP-L20</shortName>
    </alternativeName>
</protein>
<name>RM20_XENLA</name>
<proteinExistence type="evidence at transcript level"/>
<reference key="1">
    <citation type="submission" date="2004-10" db="EMBL/GenBank/DDBJ databases">
        <authorList>
            <consortium name="NIH - Xenopus Gene Collection (XGC) project"/>
        </authorList>
    </citation>
    <scope>NUCLEOTIDE SEQUENCE [LARGE SCALE MRNA]</scope>
    <source>
        <tissue>Kidney</tissue>
    </source>
</reference>
<gene>
    <name type="primary">mrpl20</name>
</gene>
<dbReference type="EMBL" id="BC084891">
    <property type="protein sequence ID" value="AAH84891.1"/>
    <property type="molecule type" value="mRNA"/>
</dbReference>
<dbReference type="RefSeq" id="NP_001088533.1">
    <property type="nucleotide sequence ID" value="NM_001095064.1"/>
</dbReference>
<dbReference type="SMR" id="Q5U4Z8"/>
<dbReference type="DNASU" id="495406"/>
<dbReference type="GeneID" id="495406"/>
<dbReference type="KEGG" id="xla:495406"/>
<dbReference type="AGR" id="Xenbase:XB-GENE-5819990"/>
<dbReference type="CTD" id="495406"/>
<dbReference type="Xenbase" id="XB-GENE-5819990">
    <property type="gene designation" value="mrpl20.L"/>
</dbReference>
<dbReference type="OMA" id="GRRKNVW"/>
<dbReference type="OrthoDB" id="10251781at2759"/>
<dbReference type="Proteomes" id="UP000186698">
    <property type="component" value="Chromosome 7L"/>
</dbReference>
<dbReference type="Bgee" id="495406">
    <property type="expression patterns" value="Expressed in neurula embryo and 19 other cell types or tissues"/>
</dbReference>
<dbReference type="GO" id="GO:0005762">
    <property type="term" value="C:mitochondrial large ribosomal subunit"/>
    <property type="evidence" value="ECO:0000250"/>
    <property type="project" value="UniProtKB"/>
</dbReference>
<dbReference type="GO" id="GO:0005761">
    <property type="term" value="C:mitochondrial ribosome"/>
    <property type="evidence" value="ECO:0000318"/>
    <property type="project" value="GO_Central"/>
</dbReference>
<dbReference type="GO" id="GO:0019843">
    <property type="term" value="F:rRNA binding"/>
    <property type="evidence" value="ECO:0007669"/>
    <property type="project" value="InterPro"/>
</dbReference>
<dbReference type="GO" id="GO:0003735">
    <property type="term" value="F:structural constituent of ribosome"/>
    <property type="evidence" value="ECO:0000318"/>
    <property type="project" value="GO_Central"/>
</dbReference>
<dbReference type="GO" id="GO:0006412">
    <property type="term" value="P:translation"/>
    <property type="evidence" value="ECO:0007669"/>
    <property type="project" value="InterPro"/>
</dbReference>
<dbReference type="CDD" id="cd07026">
    <property type="entry name" value="Ribosomal_L20"/>
    <property type="match status" value="1"/>
</dbReference>
<dbReference type="FunFam" id="1.10.1900.20:FF:000001">
    <property type="entry name" value="50S ribosomal protein L20"/>
    <property type="match status" value="1"/>
</dbReference>
<dbReference type="Gene3D" id="6.10.160.10">
    <property type="match status" value="1"/>
</dbReference>
<dbReference type="Gene3D" id="1.10.1900.20">
    <property type="entry name" value="Ribosomal protein L20"/>
    <property type="match status" value="1"/>
</dbReference>
<dbReference type="InterPro" id="IPR005813">
    <property type="entry name" value="Ribosomal_bL20"/>
</dbReference>
<dbReference type="InterPro" id="IPR035566">
    <property type="entry name" value="Ribosomal_protein_bL20_C"/>
</dbReference>
<dbReference type="NCBIfam" id="TIGR01032">
    <property type="entry name" value="rplT_bact"/>
    <property type="match status" value="1"/>
</dbReference>
<dbReference type="PANTHER" id="PTHR10986">
    <property type="entry name" value="39S RIBOSOMAL PROTEIN L20"/>
    <property type="match status" value="1"/>
</dbReference>
<dbReference type="Pfam" id="PF00453">
    <property type="entry name" value="Ribosomal_L20"/>
    <property type="match status" value="1"/>
</dbReference>
<dbReference type="PRINTS" id="PR00062">
    <property type="entry name" value="RIBOSOMALL20"/>
</dbReference>
<dbReference type="SUPFAM" id="SSF74731">
    <property type="entry name" value="Ribosomal protein L20"/>
    <property type="match status" value="1"/>
</dbReference>
<sequence length="149" mass="17366">MVFLSLSRWVRSRGPDRYWRVQEVLKHARHFRGRKNRCFSLAVRAVRRAFVYSTKARKAKKRIMRALWVSRIAGATREHGMKYPMLMSNLVKCQVALNRKVISDMSIYEPKTFKSLAALAKRRRDEGILAALGDGKEPEGIFSRVVNYH</sequence>
<evidence type="ECO:0000250" key="1">
    <source>
        <dbReference type="UniProtKB" id="Q2TBR2"/>
    </source>
</evidence>
<evidence type="ECO:0000250" key="2">
    <source>
        <dbReference type="UniProtKB" id="Q9BYC9"/>
    </source>
</evidence>
<evidence type="ECO:0000305" key="3"/>
<organism>
    <name type="scientific">Xenopus laevis</name>
    <name type="common">African clawed frog</name>
    <dbReference type="NCBI Taxonomy" id="8355"/>
    <lineage>
        <taxon>Eukaryota</taxon>
        <taxon>Metazoa</taxon>
        <taxon>Chordata</taxon>
        <taxon>Craniata</taxon>
        <taxon>Vertebrata</taxon>
        <taxon>Euteleostomi</taxon>
        <taxon>Amphibia</taxon>
        <taxon>Batrachia</taxon>
        <taxon>Anura</taxon>
        <taxon>Pipoidea</taxon>
        <taxon>Pipidae</taxon>
        <taxon>Xenopodinae</taxon>
        <taxon>Xenopus</taxon>
        <taxon>Xenopus</taxon>
    </lineage>
</organism>
<keyword id="KW-0496">Mitochondrion</keyword>
<keyword id="KW-1185">Reference proteome</keyword>
<keyword id="KW-0687">Ribonucleoprotein</keyword>
<keyword id="KW-0689">Ribosomal protein</keyword>
<keyword id="KW-0809">Transit peptide</keyword>
<comment type="subunit">
    <text evidence="2">Component of the mitochondrial ribosome large subunit (39S) which comprises a 16S rRNA and about 50 distinct proteins.</text>
</comment>
<comment type="subcellular location">
    <subcellularLocation>
        <location evidence="2">Mitochondrion</location>
    </subcellularLocation>
</comment>
<comment type="similarity">
    <text evidence="3">Belongs to the bacterial ribosomal protein bL20 family.</text>
</comment>